<name>FRIH_BOVIN</name>
<protein>
    <recommendedName>
        <fullName>Ferritin heavy chain</fullName>
        <shortName>Ferritin H subunit</shortName>
        <ecNumber evidence="1">1.16.3.1</ecNumber>
    </recommendedName>
    <component>
        <recommendedName>
            <fullName>Ferritin heavy chain, N-terminally processed</fullName>
        </recommendedName>
    </component>
</protein>
<dbReference type="EC" id="1.16.3.1" evidence="1"/>
<dbReference type="EMBL" id="AB003093">
    <property type="protein sequence ID" value="BAA24818.1"/>
    <property type="molecule type" value="mRNA"/>
</dbReference>
<dbReference type="EMBL" id="AY911329">
    <property type="protein sequence ID" value="AAW82097.1"/>
    <property type="molecule type" value="mRNA"/>
</dbReference>
<dbReference type="EMBL" id="BC105376">
    <property type="protein sequence ID" value="AAI05377.1"/>
    <property type="molecule type" value="mRNA"/>
</dbReference>
<dbReference type="RefSeq" id="NP_776487.1">
    <property type="nucleotide sequence ID" value="NM_174062.4"/>
</dbReference>
<dbReference type="PDB" id="7U5L">
    <property type="method" value="EM"/>
    <property type="resolution" value="2.67 A"/>
    <property type="chains" value="A/B/C/D/E/F/G/H/I/J/K/L/M/N/O/P/Q/R/S/T/U/V/W/X=1-181"/>
</dbReference>
<dbReference type="PDBsum" id="7U5L"/>
<dbReference type="EMDB" id="EMD-26354"/>
<dbReference type="SMR" id="O46414"/>
<dbReference type="FunCoup" id="O46414">
    <property type="interactions" value="969"/>
</dbReference>
<dbReference type="STRING" id="9913.ENSBTAP00000071152"/>
<dbReference type="PaxDb" id="9913-ENSBTAP00000014853"/>
<dbReference type="PeptideAtlas" id="O46414"/>
<dbReference type="Ensembl" id="ENSBTAT00000014853.6">
    <property type="protein sequence ID" value="ENSBTAP00000014853.5"/>
    <property type="gene ID" value="ENSBTAG00000011184.6"/>
</dbReference>
<dbReference type="GeneID" id="281173"/>
<dbReference type="KEGG" id="bta:281173"/>
<dbReference type="CTD" id="2495"/>
<dbReference type="VEuPathDB" id="HostDB:ENSBTAG00000011184"/>
<dbReference type="VGNC" id="VGNC:56265">
    <property type="gene designation" value="FTH1"/>
</dbReference>
<dbReference type="eggNOG" id="KOG2332">
    <property type="taxonomic scope" value="Eukaryota"/>
</dbReference>
<dbReference type="GeneTree" id="ENSGT00950000182841"/>
<dbReference type="HOGENOM" id="CLU_065681_4_0_1"/>
<dbReference type="InParanoid" id="O46414"/>
<dbReference type="OMA" id="FFLKASM"/>
<dbReference type="OrthoDB" id="186462at2759"/>
<dbReference type="Reactome" id="R-BTA-6798695">
    <property type="pathway name" value="Neutrophil degranulation"/>
</dbReference>
<dbReference type="Reactome" id="R-BTA-917937">
    <property type="pathway name" value="Iron uptake and transport"/>
</dbReference>
<dbReference type="Proteomes" id="UP000009136">
    <property type="component" value="Chromosome 29"/>
</dbReference>
<dbReference type="Bgee" id="ENSBTAG00000011184">
    <property type="expression patterns" value="Expressed in monocyte and 103 other cell types or tissues"/>
</dbReference>
<dbReference type="GO" id="GO:0005776">
    <property type="term" value="C:autophagosome"/>
    <property type="evidence" value="ECO:0007669"/>
    <property type="project" value="UniProtKB-SubCell"/>
</dbReference>
<dbReference type="GO" id="GO:0005737">
    <property type="term" value="C:cytoplasm"/>
    <property type="evidence" value="ECO:0000318"/>
    <property type="project" value="GO_Central"/>
</dbReference>
<dbReference type="GO" id="GO:0031410">
    <property type="term" value="C:cytoplasmic vesicle"/>
    <property type="evidence" value="ECO:0007669"/>
    <property type="project" value="UniProtKB-KW"/>
</dbReference>
<dbReference type="GO" id="GO:0005764">
    <property type="term" value="C:lysosome"/>
    <property type="evidence" value="ECO:0007669"/>
    <property type="project" value="UniProtKB-SubCell"/>
</dbReference>
<dbReference type="GO" id="GO:0008199">
    <property type="term" value="F:ferric iron binding"/>
    <property type="evidence" value="ECO:0000318"/>
    <property type="project" value="GO_Central"/>
</dbReference>
<dbReference type="GO" id="GO:0008198">
    <property type="term" value="F:ferrous iron binding"/>
    <property type="evidence" value="ECO:0000318"/>
    <property type="project" value="GO_Central"/>
</dbReference>
<dbReference type="GO" id="GO:0004322">
    <property type="term" value="F:ferroxidase activity"/>
    <property type="evidence" value="ECO:0007669"/>
    <property type="project" value="UniProtKB-EC"/>
</dbReference>
<dbReference type="GO" id="GO:0006955">
    <property type="term" value="P:immune response"/>
    <property type="evidence" value="ECO:0000250"/>
    <property type="project" value="UniProtKB"/>
</dbReference>
<dbReference type="GO" id="GO:0006879">
    <property type="term" value="P:intracellular iron ion homeostasis"/>
    <property type="evidence" value="ECO:0007669"/>
    <property type="project" value="UniProtKB-KW"/>
</dbReference>
<dbReference type="GO" id="GO:0006826">
    <property type="term" value="P:iron ion transport"/>
    <property type="evidence" value="ECO:0000318"/>
    <property type="project" value="GO_Central"/>
</dbReference>
<dbReference type="GO" id="GO:0008285">
    <property type="term" value="P:negative regulation of cell population proliferation"/>
    <property type="evidence" value="ECO:0000250"/>
    <property type="project" value="UniProtKB"/>
</dbReference>
<dbReference type="GO" id="GO:0110076">
    <property type="term" value="P:negative regulation of ferroptosis"/>
    <property type="evidence" value="ECO:0000250"/>
    <property type="project" value="UniProtKB"/>
</dbReference>
<dbReference type="CDD" id="cd01056">
    <property type="entry name" value="Euk_Ferritin"/>
    <property type="match status" value="1"/>
</dbReference>
<dbReference type="FunFam" id="1.20.1260.10:FF:000024">
    <property type="entry name" value="Ferritin heavy chain"/>
    <property type="match status" value="1"/>
</dbReference>
<dbReference type="Gene3D" id="1.20.1260.10">
    <property type="match status" value="1"/>
</dbReference>
<dbReference type="InterPro" id="IPR001519">
    <property type="entry name" value="Ferritin"/>
</dbReference>
<dbReference type="InterPro" id="IPR012347">
    <property type="entry name" value="Ferritin-like"/>
</dbReference>
<dbReference type="InterPro" id="IPR009040">
    <property type="entry name" value="Ferritin-like_diiron"/>
</dbReference>
<dbReference type="InterPro" id="IPR009078">
    <property type="entry name" value="Ferritin-like_SF"/>
</dbReference>
<dbReference type="InterPro" id="IPR014034">
    <property type="entry name" value="Ferritin_CS"/>
</dbReference>
<dbReference type="InterPro" id="IPR008331">
    <property type="entry name" value="Ferritin_DPS_dom"/>
</dbReference>
<dbReference type="PANTHER" id="PTHR11431">
    <property type="entry name" value="FERRITIN"/>
    <property type="match status" value="1"/>
</dbReference>
<dbReference type="PANTHER" id="PTHR11431:SF37">
    <property type="entry name" value="FERRITIN HEAVY CHAIN"/>
    <property type="match status" value="1"/>
</dbReference>
<dbReference type="Pfam" id="PF00210">
    <property type="entry name" value="Ferritin"/>
    <property type="match status" value="1"/>
</dbReference>
<dbReference type="SUPFAM" id="SSF47240">
    <property type="entry name" value="Ferritin-like"/>
    <property type="match status" value="1"/>
</dbReference>
<dbReference type="PROSITE" id="PS00540">
    <property type="entry name" value="FERRITIN_1"/>
    <property type="match status" value="1"/>
</dbReference>
<dbReference type="PROSITE" id="PS00204">
    <property type="entry name" value="FERRITIN_2"/>
    <property type="match status" value="1"/>
</dbReference>
<dbReference type="PROSITE" id="PS50905">
    <property type="entry name" value="FERRITIN_LIKE"/>
    <property type="match status" value="1"/>
</dbReference>
<keyword id="KW-0002">3D-structure</keyword>
<keyword id="KW-0007">Acetylation</keyword>
<keyword id="KW-0963">Cytoplasm</keyword>
<keyword id="KW-0968">Cytoplasmic vesicle</keyword>
<keyword id="KW-0408">Iron</keyword>
<keyword id="KW-0409">Iron storage</keyword>
<keyword id="KW-0458">Lysosome</keyword>
<keyword id="KW-0479">Metal-binding</keyword>
<keyword id="KW-0560">Oxidoreductase</keyword>
<keyword id="KW-0597">Phosphoprotein</keyword>
<keyword id="KW-1185">Reference proteome</keyword>
<comment type="function">
    <text evidence="1 2">Stores iron in a soluble, non-toxic, readily available form (By similarity). Important for iron homeostasis (By similarity). Has ferroxidase activity (By similarity). Iron is taken up in the ferrous form and deposited as ferric hydroxides after oxidation (By similarity). Also plays a role in delivery of iron to cells (By similarity). Mediates iron uptake in capsule cells of the developing kidney (By similarity). Delivery to lysosomes is mediated by the cargo receptor NCOA4 for autophagic degradation and release of iron (By similarity).</text>
</comment>
<comment type="catalytic activity">
    <reaction evidence="1">
        <text>4 Fe(2+) + O2 + 4 H(+) = 4 Fe(3+) + 2 H2O</text>
        <dbReference type="Rhea" id="RHEA:11148"/>
        <dbReference type="ChEBI" id="CHEBI:15377"/>
        <dbReference type="ChEBI" id="CHEBI:15378"/>
        <dbReference type="ChEBI" id="CHEBI:15379"/>
        <dbReference type="ChEBI" id="CHEBI:29033"/>
        <dbReference type="ChEBI" id="CHEBI:29034"/>
        <dbReference type="EC" id="1.16.3.1"/>
    </reaction>
</comment>
<comment type="subunit">
    <text evidence="1 2">Oligomer of 24 subunits. There are two types of subunits: L (light) chain and H (heavy) chain. The major chain can be light or heavy, depending on the species and tissue type. The functional molecule forms a roughly spherical shell with a diameter of 12 nm and contains a central cavity into which the insoluble mineral iron core is deposited. Interacts with NCOA4; NCOA4 promotes targeting of the iron-binding ferritin complex to autolysosomes following starvation or iron depletion (By similarity).</text>
</comment>
<comment type="subcellular location">
    <subcellularLocation>
        <location evidence="3">Cytoplasm</location>
    </subcellularLocation>
    <subcellularLocation>
        <location evidence="1">Lysosome</location>
    </subcellularLocation>
    <subcellularLocation>
        <location evidence="1">Cytoplasmic vesicle</location>
        <location evidence="1">Autophagosome</location>
    </subcellularLocation>
</comment>
<comment type="similarity">
    <text evidence="5">Belongs to the ferritin family.</text>
</comment>
<proteinExistence type="evidence at protein level"/>
<feature type="chain" id="PRO_0000424468" description="Ferritin heavy chain">
    <location>
        <begin position="1"/>
        <end position="181"/>
    </location>
</feature>
<feature type="initiator methionine" description="Removed; alternate" evidence="1">
    <location>
        <position position="1"/>
    </location>
</feature>
<feature type="chain" id="PRO_0000201045" description="Ferritin heavy chain, N-terminally processed">
    <location>
        <begin position="2"/>
        <end position="181"/>
    </location>
</feature>
<feature type="domain" description="Ferritin-like diiron" evidence="4">
    <location>
        <begin position="11"/>
        <end position="160"/>
    </location>
</feature>
<feature type="binding site" evidence="4">
    <location>
        <position position="28"/>
    </location>
    <ligand>
        <name>Fe cation</name>
        <dbReference type="ChEBI" id="CHEBI:24875"/>
        <label>1</label>
    </ligand>
</feature>
<feature type="binding site" evidence="4">
    <location>
        <position position="63"/>
    </location>
    <ligand>
        <name>Fe cation</name>
        <dbReference type="ChEBI" id="CHEBI:24875"/>
        <label>1</label>
    </ligand>
</feature>
<feature type="binding site" evidence="4">
    <location>
        <position position="63"/>
    </location>
    <ligand>
        <name>Fe cation</name>
        <dbReference type="ChEBI" id="CHEBI:24875"/>
        <label>2</label>
    </ligand>
</feature>
<feature type="binding site" evidence="4">
    <location>
        <position position="66"/>
    </location>
    <ligand>
        <name>Fe cation</name>
        <dbReference type="ChEBI" id="CHEBI:24875"/>
        <label>1</label>
    </ligand>
</feature>
<feature type="binding site" evidence="4">
    <location>
        <position position="108"/>
    </location>
    <ligand>
        <name>Fe cation</name>
        <dbReference type="ChEBI" id="CHEBI:24875"/>
        <label>2</label>
    </ligand>
</feature>
<feature type="binding site" evidence="4">
    <location>
        <position position="142"/>
    </location>
    <ligand>
        <name>Fe cation</name>
        <dbReference type="ChEBI" id="CHEBI:24875"/>
        <label>2</label>
    </ligand>
</feature>
<feature type="modified residue" description="N-acetylmethionine" evidence="1">
    <location>
        <position position="1"/>
    </location>
</feature>
<feature type="modified residue" description="N-acetylthreonine; in Ferritin heavy chain, N-terminally processed" evidence="1">
    <location>
        <position position="2"/>
    </location>
</feature>
<feature type="modified residue" description="Phosphoserine" evidence="1">
    <location>
        <position position="179"/>
    </location>
</feature>
<feature type="helix" evidence="6">
    <location>
        <begin position="15"/>
        <end position="41"/>
    </location>
</feature>
<feature type="turn" evidence="6">
    <location>
        <begin position="45"/>
        <end position="47"/>
    </location>
</feature>
<feature type="helix" evidence="6">
    <location>
        <begin position="50"/>
        <end position="76"/>
    </location>
</feature>
<feature type="helix" evidence="6">
    <location>
        <begin position="97"/>
        <end position="124"/>
    </location>
</feature>
<feature type="helix" evidence="6">
    <location>
        <begin position="128"/>
        <end position="137"/>
    </location>
</feature>
<feature type="helix" evidence="6">
    <location>
        <begin position="139"/>
        <end position="159"/>
    </location>
</feature>
<feature type="turn" evidence="6">
    <location>
        <begin position="160"/>
        <end position="163"/>
    </location>
</feature>
<feature type="helix" evidence="6">
    <location>
        <begin position="165"/>
        <end position="174"/>
    </location>
</feature>
<gene>
    <name type="primary">FTH1</name>
    <name type="synonym">FTH</name>
</gene>
<organism>
    <name type="scientific">Bos taurus</name>
    <name type="common">Bovine</name>
    <dbReference type="NCBI Taxonomy" id="9913"/>
    <lineage>
        <taxon>Eukaryota</taxon>
        <taxon>Metazoa</taxon>
        <taxon>Chordata</taxon>
        <taxon>Craniata</taxon>
        <taxon>Vertebrata</taxon>
        <taxon>Euteleostomi</taxon>
        <taxon>Mammalia</taxon>
        <taxon>Eutheria</taxon>
        <taxon>Laurasiatheria</taxon>
        <taxon>Artiodactyla</taxon>
        <taxon>Ruminantia</taxon>
        <taxon>Pecora</taxon>
        <taxon>Bovidae</taxon>
        <taxon>Bovinae</taxon>
        <taxon>Bos</taxon>
    </lineage>
</organism>
<sequence length="181" mass="21052">MTTASPSQVRQNYHQDSEAAINRQINLELYASYVYLSMSYYFDRDDVALKNFAKYFLHQSHEEREHAERLMKLQNQRGGRIFLQDIKKPDRDDWENGLTAMECALCLERSVNQSLLELHKLATEKNDPHLCDFIETHYLNEQVEAIKELGDHITNLRKMGAPGSGMAEYLFDKHTLGHSES</sequence>
<accession>O46414</accession>
<accession>Q56JZ8</accession>
<evidence type="ECO:0000250" key="1">
    <source>
        <dbReference type="UniProtKB" id="P02794"/>
    </source>
</evidence>
<evidence type="ECO:0000250" key="2">
    <source>
        <dbReference type="UniProtKB" id="P09528"/>
    </source>
</evidence>
<evidence type="ECO:0000250" key="3">
    <source>
        <dbReference type="UniProtKB" id="P19130"/>
    </source>
</evidence>
<evidence type="ECO:0000255" key="4">
    <source>
        <dbReference type="PROSITE-ProRule" id="PRU00085"/>
    </source>
</evidence>
<evidence type="ECO:0000305" key="5"/>
<evidence type="ECO:0007829" key="6">
    <source>
        <dbReference type="PDB" id="7U5L"/>
    </source>
</evidence>
<reference key="1">
    <citation type="journal article" date="1997" name="Comp. Biochem. Physiol.">
        <title>Sequencing of cDNA clones that encode bovine ferritin H and L chains.</title>
        <authorList>
            <person name="Orino K."/>
            <person name="Eguchi K."/>
            <person name="Nakayama T."/>
            <person name="Yamamoto S."/>
            <person name="Watanabe K."/>
        </authorList>
    </citation>
    <scope>NUCLEOTIDE SEQUENCE [MRNA]</scope>
    <source>
        <tissue>Spleen</tissue>
    </source>
</reference>
<reference key="2">
    <citation type="submission" date="2005-01" db="EMBL/GenBank/DDBJ databases">
        <title>Analysis of sequences obtained from constructed full-length bovine cDNA libraries.</title>
        <authorList>
            <person name="Yu J."/>
            <person name="Meng Y."/>
            <person name="Wang Z."/>
            <person name="Hansen C."/>
            <person name="Li C."/>
            <person name="Moore S.S."/>
        </authorList>
    </citation>
    <scope>NUCLEOTIDE SEQUENCE [LARGE SCALE MRNA]</scope>
    <source>
        <tissue>Lymphoid epithelium</tissue>
    </source>
</reference>
<reference key="3">
    <citation type="submission" date="2005-09" db="EMBL/GenBank/DDBJ databases">
        <authorList>
            <consortium name="NIH - Mammalian Gene Collection (MGC) project"/>
        </authorList>
    </citation>
    <scope>NUCLEOTIDE SEQUENCE [LARGE SCALE MRNA]</scope>
    <source>
        <strain>Crossbred X Angus</strain>
        <tissue>Ileum</tissue>
    </source>
</reference>